<name>EFTS_GEOSW</name>
<accession>C5D9B6</accession>
<feature type="chain" id="PRO_1000202242" description="Elongation factor Ts">
    <location>
        <begin position="1"/>
        <end position="294"/>
    </location>
</feature>
<feature type="region of interest" description="Involved in Mg(2+) ion dislocation from EF-Tu" evidence="1">
    <location>
        <begin position="79"/>
        <end position="82"/>
    </location>
</feature>
<organism>
    <name type="scientific">Geobacillus sp. (strain WCH70)</name>
    <dbReference type="NCBI Taxonomy" id="471223"/>
    <lineage>
        <taxon>Bacteria</taxon>
        <taxon>Bacillati</taxon>
        <taxon>Bacillota</taxon>
        <taxon>Bacilli</taxon>
        <taxon>Bacillales</taxon>
        <taxon>Anoxybacillaceae</taxon>
        <taxon>Geobacillus</taxon>
    </lineage>
</organism>
<protein>
    <recommendedName>
        <fullName evidence="1">Elongation factor Ts</fullName>
        <shortName evidence="1">EF-Ts</shortName>
    </recommendedName>
</protein>
<evidence type="ECO:0000255" key="1">
    <source>
        <dbReference type="HAMAP-Rule" id="MF_00050"/>
    </source>
</evidence>
<proteinExistence type="inferred from homology"/>
<dbReference type="EMBL" id="CP001638">
    <property type="protein sequence ID" value="ACS24002.1"/>
    <property type="molecule type" value="Genomic_DNA"/>
</dbReference>
<dbReference type="SMR" id="C5D9B6"/>
<dbReference type="STRING" id="471223.GWCH70_1142"/>
<dbReference type="KEGG" id="gwc:GWCH70_1142"/>
<dbReference type="eggNOG" id="COG0264">
    <property type="taxonomic scope" value="Bacteria"/>
</dbReference>
<dbReference type="HOGENOM" id="CLU_047155_0_2_9"/>
<dbReference type="OrthoDB" id="9808348at2"/>
<dbReference type="GO" id="GO:0005737">
    <property type="term" value="C:cytoplasm"/>
    <property type="evidence" value="ECO:0007669"/>
    <property type="project" value="UniProtKB-SubCell"/>
</dbReference>
<dbReference type="GO" id="GO:0003746">
    <property type="term" value="F:translation elongation factor activity"/>
    <property type="evidence" value="ECO:0007669"/>
    <property type="project" value="UniProtKB-UniRule"/>
</dbReference>
<dbReference type="CDD" id="cd14275">
    <property type="entry name" value="UBA_EF-Ts"/>
    <property type="match status" value="1"/>
</dbReference>
<dbReference type="FunFam" id="1.10.286.20:FF:000003">
    <property type="entry name" value="Elongation factor Ts"/>
    <property type="match status" value="1"/>
</dbReference>
<dbReference type="FunFam" id="1.10.8.10:FF:000001">
    <property type="entry name" value="Elongation factor Ts"/>
    <property type="match status" value="1"/>
</dbReference>
<dbReference type="Gene3D" id="1.10.286.20">
    <property type="match status" value="1"/>
</dbReference>
<dbReference type="Gene3D" id="1.10.8.10">
    <property type="entry name" value="DNA helicase RuvA subunit, C-terminal domain"/>
    <property type="match status" value="1"/>
</dbReference>
<dbReference type="Gene3D" id="3.30.479.20">
    <property type="entry name" value="Elongation factor Ts, dimerisation domain"/>
    <property type="match status" value="2"/>
</dbReference>
<dbReference type="HAMAP" id="MF_00050">
    <property type="entry name" value="EF_Ts"/>
    <property type="match status" value="1"/>
</dbReference>
<dbReference type="InterPro" id="IPR036402">
    <property type="entry name" value="EF-Ts_dimer_sf"/>
</dbReference>
<dbReference type="InterPro" id="IPR001816">
    <property type="entry name" value="Transl_elong_EFTs/EF1B"/>
</dbReference>
<dbReference type="InterPro" id="IPR014039">
    <property type="entry name" value="Transl_elong_EFTs/EF1B_dimer"/>
</dbReference>
<dbReference type="InterPro" id="IPR018101">
    <property type="entry name" value="Transl_elong_Ts_CS"/>
</dbReference>
<dbReference type="InterPro" id="IPR009060">
    <property type="entry name" value="UBA-like_sf"/>
</dbReference>
<dbReference type="NCBIfam" id="TIGR00116">
    <property type="entry name" value="tsf"/>
    <property type="match status" value="1"/>
</dbReference>
<dbReference type="PANTHER" id="PTHR11741">
    <property type="entry name" value="ELONGATION FACTOR TS"/>
    <property type="match status" value="1"/>
</dbReference>
<dbReference type="PANTHER" id="PTHR11741:SF0">
    <property type="entry name" value="ELONGATION FACTOR TS, MITOCHONDRIAL"/>
    <property type="match status" value="1"/>
</dbReference>
<dbReference type="Pfam" id="PF25025">
    <property type="entry name" value="EF-Ts_N"/>
    <property type="match status" value="1"/>
</dbReference>
<dbReference type="Pfam" id="PF00889">
    <property type="entry name" value="EF_TS"/>
    <property type="match status" value="1"/>
</dbReference>
<dbReference type="SUPFAM" id="SSF54713">
    <property type="entry name" value="Elongation factor Ts (EF-Ts), dimerisation domain"/>
    <property type="match status" value="2"/>
</dbReference>
<dbReference type="SUPFAM" id="SSF46934">
    <property type="entry name" value="UBA-like"/>
    <property type="match status" value="1"/>
</dbReference>
<dbReference type="PROSITE" id="PS01126">
    <property type="entry name" value="EF_TS_1"/>
    <property type="match status" value="1"/>
</dbReference>
<dbReference type="PROSITE" id="PS01127">
    <property type="entry name" value="EF_TS_2"/>
    <property type="match status" value="1"/>
</dbReference>
<keyword id="KW-0963">Cytoplasm</keyword>
<keyword id="KW-0251">Elongation factor</keyword>
<keyword id="KW-0648">Protein biosynthesis</keyword>
<reference key="1">
    <citation type="submission" date="2009-06" db="EMBL/GenBank/DDBJ databases">
        <title>Complete sequence of chromosome of Geopacillus sp. WCH70.</title>
        <authorList>
            <consortium name="US DOE Joint Genome Institute"/>
            <person name="Lucas S."/>
            <person name="Copeland A."/>
            <person name="Lapidus A."/>
            <person name="Glavina del Rio T."/>
            <person name="Dalin E."/>
            <person name="Tice H."/>
            <person name="Bruce D."/>
            <person name="Goodwin L."/>
            <person name="Pitluck S."/>
            <person name="Chertkov O."/>
            <person name="Brettin T."/>
            <person name="Detter J.C."/>
            <person name="Han C."/>
            <person name="Larimer F."/>
            <person name="Land M."/>
            <person name="Hauser L."/>
            <person name="Kyrpides N."/>
            <person name="Mikhailova N."/>
            <person name="Brumm P."/>
            <person name="Mead D.A."/>
            <person name="Richardson P."/>
        </authorList>
    </citation>
    <scope>NUCLEOTIDE SEQUENCE [LARGE SCALE GENOMIC DNA]</scope>
    <source>
        <strain>WCH70</strain>
    </source>
</reference>
<sequence>MAITAQMVKELREKTGAGMMDCKKALTETNGDMEKAIDWLREKGIAKAAKKADRIAAEGMTLVEVDGNTAVILEVNSETDFVAKNEAFQTLVKELAAHLLKHKPATLEEALGQTMDNGATVQEHINAAIAKIGEKITLRRFEIVEKGENDVFGAYLHMGGRIGVLTLLAGSANQEVAKDVAMHIAALHPKYVSRDQVPQEEINREREVLKQQALNEGKPEHIVEKMVEGRLNKFYEDICLLEQAFVKNPDVKVRQYVESNGATVKTFIRYEVGEGMEKRQDNFAEEVMNQMRKQ</sequence>
<gene>
    <name evidence="1" type="primary">tsf</name>
    <name type="ordered locus">GWCH70_1142</name>
</gene>
<comment type="function">
    <text evidence="1">Associates with the EF-Tu.GDP complex and induces the exchange of GDP to GTP. It remains bound to the aminoacyl-tRNA.EF-Tu.GTP complex up to the GTP hydrolysis stage on the ribosome.</text>
</comment>
<comment type="subcellular location">
    <subcellularLocation>
        <location evidence="1">Cytoplasm</location>
    </subcellularLocation>
</comment>
<comment type="similarity">
    <text evidence="1">Belongs to the EF-Ts family.</text>
</comment>